<name>GP146_XENLA</name>
<protein>
    <recommendedName>
        <fullName>G-protein coupled receptor 146</fullName>
    </recommendedName>
</protein>
<keyword id="KW-1003">Cell membrane</keyword>
<keyword id="KW-0297">G-protein coupled receptor</keyword>
<keyword id="KW-0325">Glycoprotein</keyword>
<keyword id="KW-0472">Membrane</keyword>
<keyword id="KW-0675">Receptor</keyword>
<keyword id="KW-1185">Reference proteome</keyword>
<keyword id="KW-0807">Transducer</keyword>
<keyword id="KW-0812">Transmembrane</keyword>
<keyword id="KW-1133">Transmembrane helix</keyword>
<gene>
    <name type="primary">gpr146</name>
</gene>
<reference key="1">
    <citation type="submission" date="2003-11" db="EMBL/GenBank/DDBJ databases">
        <authorList>
            <consortium name="NIH - Xenopus Gene Collection (XGC) project"/>
        </authorList>
    </citation>
    <scope>NUCLEOTIDE SEQUENCE [LARGE SCALE MRNA]</scope>
    <source>
        <tissue>Lung</tissue>
    </source>
</reference>
<accession>Q6P7G9</accession>
<feature type="chain" id="PRO_0000069624" description="G-protein coupled receptor 146">
    <location>
        <begin position="1"/>
        <end position="333"/>
    </location>
</feature>
<feature type="topological domain" description="Extracellular" evidence="2">
    <location>
        <begin position="1"/>
        <end position="21"/>
    </location>
</feature>
<feature type="transmembrane region" description="Helical; Name=1" evidence="2">
    <location>
        <begin position="22"/>
        <end position="42"/>
    </location>
</feature>
<feature type="topological domain" description="Cytoplasmic" evidence="2">
    <location>
        <begin position="43"/>
        <end position="65"/>
    </location>
</feature>
<feature type="transmembrane region" description="Helical; Name=2" evidence="2">
    <location>
        <begin position="66"/>
        <end position="86"/>
    </location>
</feature>
<feature type="topological domain" description="Extracellular" evidence="2">
    <location>
        <begin position="87"/>
        <end position="102"/>
    </location>
</feature>
<feature type="transmembrane region" description="Helical; Name=3" evidence="2">
    <location>
        <begin position="103"/>
        <end position="123"/>
    </location>
</feature>
<feature type="topological domain" description="Cytoplasmic" evidence="2">
    <location>
        <begin position="124"/>
        <end position="146"/>
    </location>
</feature>
<feature type="transmembrane region" description="Helical; Name=4" evidence="2">
    <location>
        <begin position="147"/>
        <end position="167"/>
    </location>
</feature>
<feature type="topological domain" description="Extracellular" evidence="2">
    <location>
        <begin position="168"/>
        <end position="189"/>
    </location>
</feature>
<feature type="transmembrane region" description="Helical; Name=5" evidence="2">
    <location>
        <begin position="190"/>
        <end position="210"/>
    </location>
</feature>
<feature type="topological domain" description="Cytoplasmic" evidence="2">
    <location>
        <begin position="211"/>
        <end position="234"/>
    </location>
</feature>
<feature type="transmembrane region" description="Helical; Name=6" evidence="2">
    <location>
        <begin position="235"/>
        <end position="255"/>
    </location>
</feature>
<feature type="topological domain" description="Extracellular" evidence="2">
    <location>
        <begin position="256"/>
        <end position="275"/>
    </location>
</feature>
<feature type="transmembrane region" description="Helical; Name=7" evidence="2">
    <location>
        <begin position="276"/>
        <end position="296"/>
    </location>
</feature>
<feature type="topological domain" description="Cytoplasmic" evidence="2">
    <location>
        <begin position="297"/>
        <end position="333"/>
    </location>
</feature>
<feature type="glycosylation site" description="N-linked (GlcNAc...) asparagine" evidence="2">
    <location>
        <position position="8"/>
    </location>
</feature>
<proteinExistence type="evidence at transcript level"/>
<organism>
    <name type="scientific">Xenopus laevis</name>
    <name type="common">African clawed frog</name>
    <dbReference type="NCBI Taxonomy" id="8355"/>
    <lineage>
        <taxon>Eukaryota</taxon>
        <taxon>Metazoa</taxon>
        <taxon>Chordata</taxon>
        <taxon>Craniata</taxon>
        <taxon>Vertebrata</taxon>
        <taxon>Euteleostomi</taxon>
        <taxon>Amphibia</taxon>
        <taxon>Batrachia</taxon>
        <taxon>Anura</taxon>
        <taxon>Pipoidea</taxon>
        <taxon>Pipidae</taxon>
        <taxon>Xenopodinae</taxon>
        <taxon>Xenopus</taxon>
        <taxon>Xenopus</taxon>
    </lineage>
</organism>
<evidence type="ECO:0000250" key="1">
    <source>
        <dbReference type="UniProtKB" id="Q96CH1"/>
    </source>
</evidence>
<evidence type="ECO:0000255" key="2"/>
<evidence type="ECO:0000255" key="3">
    <source>
        <dbReference type="PROSITE-ProRule" id="PRU00521"/>
    </source>
</evidence>
<sequence>MWSCEDLNYTNSGEEQYLCNEFHLFLFIFSVLYLIICFPVGLCYNVQLVLVNLYNKATMTMPDVYFVNMAIAGLIINAVAPVYLFGPAYTKWSLWSFGNEVYITLLILFNVSSLVIMYSTTLLSLDYYIECALPRTYMSSVYNTKHVCGFIWGGAVLTSFSSLLFYICNHVSTKIIECSKMQNREAADAIMVLIGYVVPIIAVIYALVLILQIRKEATPLDQESGRLDPSVHRLLIATVCTQFILWTPYYVTLLVNTFMDARVKSSNTFYIRIFQFTEGLSNFLAFSSSFVLPLIHRHINKNFSGKLQRLLKRLHCGSQGCTHEHTVVQQVMT</sequence>
<dbReference type="EMBL" id="BC061674">
    <property type="protein sequence ID" value="AAH61674.1"/>
    <property type="molecule type" value="mRNA"/>
</dbReference>
<dbReference type="RefSeq" id="NP_001083569.1">
    <property type="nucleotide sequence ID" value="NM_001090100.1"/>
</dbReference>
<dbReference type="SMR" id="Q6P7G9"/>
<dbReference type="GlyCosmos" id="Q6P7G9">
    <property type="glycosylation" value="1 site, No reported glycans"/>
</dbReference>
<dbReference type="DNASU" id="398996"/>
<dbReference type="GeneID" id="398996"/>
<dbReference type="KEGG" id="xla:398996"/>
<dbReference type="AGR" id="Xenbase:XB-GENE-956310"/>
<dbReference type="CTD" id="398996"/>
<dbReference type="Xenbase" id="XB-GENE-956310">
    <property type="gene designation" value="gpr146.L"/>
</dbReference>
<dbReference type="OrthoDB" id="8660770at2759"/>
<dbReference type="Proteomes" id="UP000186698">
    <property type="component" value="Chromosome 9_10L"/>
</dbReference>
<dbReference type="Bgee" id="398996">
    <property type="expression patterns" value="Expressed in lung and 14 other cell types or tissues"/>
</dbReference>
<dbReference type="GO" id="GO:0005886">
    <property type="term" value="C:plasma membrane"/>
    <property type="evidence" value="ECO:0000250"/>
    <property type="project" value="UniProtKB"/>
</dbReference>
<dbReference type="GO" id="GO:0004930">
    <property type="term" value="F:G protein-coupled receptor activity"/>
    <property type="evidence" value="ECO:0007669"/>
    <property type="project" value="UniProtKB-KW"/>
</dbReference>
<dbReference type="CDD" id="cd14990">
    <property type="entry name" value="7tmA_GPR146"/>
    <property type="match status" value="1"/>
</dbReference>
<dbReference type="FunFam" id="1.20.1070.10:FF:000272">
    <property type="entry name" value="G protein-coupled receptor 146"/>
    <property type="match status" value="1"/>
</dbReference>
<dbReference type="Gene3D" id="1.20.1070.10">
    <property type="entry name" value="Rhodopsin 7-helix transmembrane proteins"/>
    <property type="match status" value="1"/>
</dbReference>
<dbReference type="InterPro" id="IPR000276">
    <property type="entry name" value="GPCR_Rhodpsn"/>
</dbReference>
<dbReference type="InterPro" id="IPR017452">
    <property type="entry name" value="GPCR_Rhodpsn_7TM"/>
</dbReference>
<dbReference type="InterPro" id="IPR047143">
    <property type="entry name" value="GPER1-like"/>
</dbReference>
<dbReference type="InterPro" id="IPR037487">
    <property type="entry name" value="GPR146"/>
</dbReference>
<dbReference type="PANTHER" id="PTHR24226:SF3">
    <property type="entry name" value="G-PROTEIN COUPLED RECEPTOR 146-RELATED"/>
    <property type="match status" value="1"/>
</dbReference>
<dbReference type="PANTHER" id="PTHR24226">
    <property type="entry name" value="G-PROTEIN COUPLED RECEPTOR 182 AND ESTROGEN RECEPTOR 1"/>
    <property type="match status" value="1"/>
</dbReference>
<dbReference type="Pfam" id="PF00001">
    <property type="entry name" value="7tm_1"/>
    <property type="match status" value="1"/>
</dbReference>
<dbReference type="PRINTS" id="PR00237">
    <property type="entry name" value="GPCRRHODOPSN"/>
</dbReference>
<dbReference type="SUPFAM" id="SSF81321">
    <property type="entry name" value="Family A G protein-coupled receptor-like"/>
    <property type="match status" value="1"/>
</dbReference>
<dbReference type="PROSITE" id="PS50262">
    <property type="entry name" value="G_PROTEIN_RECEP_F1_2"/>
    <property type="match status" value="1"/>
</dbReference>
<comment type="function">
    <text evidence="1">G-protein coupled receptor required for the regulation of plasma cholesterol levels.</text>
</comment>
<comment type="subcellular location">
    <subcellularLocation>
        <location evidence="1">Cell membrane</location>
        <topology evidence="2">Multi-pass membrane protein</topology>
    </subcellularLocation>
</comment>
<comment type="similarity">
    <text evidence="3">Belongs to the G-protein coupled receptor 1 family.</text>
</comment>